<reference key="1">
    <citation type="journal article" date="2010" name="J. Bacteriol.">
        <title>The genome of the amoeba symbiont 'Candidatus Amoebophilus asiaticus' reveals common mechanisms for host cell interaction among amoeba-associated bacteria.</title>
        <authorList>
            <person name="Schmitz-Esser S."/>
            <person name="Tischler P."/>
            <person name="Arnold R."/>
            <person name="Montanaro J."/>
            <person name="Wagner M."/>
            <person name="Rattei T."/>
            <person name="Horn M."/>
        </authorList>
    </citation>
    <scope>NUCLEOTIDE SEQUENCE [LARGE SCALE GENOMIC DNA]</scope>
    <source>
        <strain>5a2</strain>
    </source>
</reference>
<gene>
    <name evidence="1" type="primary">rpmG</name>
    <name type="ordered locus">Aasi_0571</name>
</gene>
<accession>B3ERX0</accession>
<feature type="chain" id="PRO_0000356372" description="Large ribosomal subunit protein bL33">
    <location>
        <begin position="1"/>
        <end position="61"/>
    </location>
</feature>
<proteinExistence type="inferred from homology"/>
<protein>
    <recommendedName>
        <fullName evidence="1">Large ribosomal subunit protein bL33</fullName>
    </recommendedName>
    <alternativeName>
        <fullName evidence="2">50S ribosomal protein L33</fullName>
    </alternativeName>
</protein>
<sequence length="61" mass="7201">MAKQKGNRIQVILECTEHRKSGMPGISRYSTEKNRKNTSDRLVLKKYNPILKKYTLHKEIK</sequence>
<comment type="similarity">
    <text evidence="1">Belongs to the bacterial ribosomal protein bL33 family.</text>
</comment>
<evidence type="ECO:0000255" key="1">
    <source>
        <dbReference type="HAMAP-Rule" id="MF_00294"/>
    </source>
</evidence>
<evidence type="ECO:0000305" key="2"/>
<dbReference type="EMBL" id="CP001102">
    <property type="protein sequence ID" value="ACE05972.1"/>
    <property type="molecule type" value="Genomic_DNA"/>
</dbReference>
<dbReference type="RefSeq" id="WP_012472740.1">
    <property type="nucleotide sequence ID" value="NC_010830.1"/>
</dbReference>
<dbReference type="SMR" id="B3ERX0"/>
<dbReference type="STRING" id="452471.Aasi_0571"/>
<dbReference type="KEGG" id="aas:Aasi_0571"/>
<dbReference type="eggNOG" id="COG0267">
    <property type="taxonomic scope" value="Bacteria"/>
</dbReference>
<dbReference type="HOGENOM" id="CLU_190949_3_0_10"/>
<dbReference type="OrthoDB" id="9801333at2"/>
<dbReference type="Proteomes" id="UP000001227">
    <property type="component" value="Chromosome"/>
</dbReference>
<dbReference type="GO" id="GO:0005737">
    <property type="term" value="C:cytoplasm"/>
    <property type="evidence" value="ECO:0007669"/>
    <property type="project" value="UniProtKB-ARBA"/>
</dbReference>
<dbReference type="GO" id="GO:1990904">
    <property type="term" value="C:ribonucleoprotein complex"/>
    <property type="evidence" value="ECO:0007669"/>
    <property type="project" value="UniProtKB-KW"/>
</dbReference>
<dbReference type="GO" id="GO:0005840">
    <property type="term" value="C:ribosome"/>
    <property type="evidence" value="ECO:0007669"/>
    <property type="project" value="UniProtKB-KW"/>
</dbReference>
<dbReference type="GO" id="GO:0003735">
    <property type="term" value="F:structural constituent of ribosome"/>
    <property type="evidence" value="ECO:0007669"/>
    <property type="project" value="InterPro"/>
</dbReference>
<dbReference type="GO" id="GO:0006412">
    <property type="term" value="P:translation"/>
    <property type="evidence" value="ECO:0007669"/>
    <property type="project" value="UniProtKB-UniRule"/>
</dbReference>
<dbReference type="Gene3D" id="2.20.28.120">
    <property type="entry name" value="Ribosomal protein L33"/>
    <property type="match status" value="1"/>
</dbReference>
<dbReference type="HAMAP" id="MF_00294">
    <property type="entry name" value="Ribosomal_bL33"/>
    <property type="match status" value="1"/>
</dbReference>
<dbReference type="InterPro" id="IPR001705">
    <property type="entry name" value="Ribosomal_bL33"/>
</dbReference>
<dbReference type="InterPro" id="IPR038584">
    <property type="entry name" value="Ribosomal_bL33_sf"/>
</dbReference>
<dbReference type="InterPro" id="IPR011332">
    <property type="entry name" value="Ribosomal_zn-bd"/>
</dbReference>
<dbReference type="NCBIfam" id="NF001764">
    <property type="entry name" value="PRK00504.1"/>
    <property type="match status" value="1"/>
</dbReference>
<dbReference type="NCBIfam" id="NF001860">
    <property type="entry name" value="PRK00595.1"/>
    <property type="match status" value="1"/>
</dbReference>
<dbReference type="NCBIfam" id="TIGR01023">
    <property type="entry name" value="rpmG_bact"/>
    <property type="match status" value="1"/>
</dbReference>
<dbReference type="PANTHER" id="PTHR43168">
    <property type="entry name" value="50S RIBOSOMAL PROTEIN L33, CHLOROPLASTIC"/>
    <property type="match status" value="1"/>
</dbReference>
<dbReference type="PANTHER" id="PTHR43168:SF2">
    <property type="entry name" value="LARGE RIBOSOMAL SUBUNIT PROTEIN BL33C"/>
    <property type="match status" value="1"/>
</dbReference>
<dbReference type="Pfam" id="PF00471">
    <property type="entry name" value="Ribosomal_L33"/>
    <property type="match status" value="1"/>
</dbReference>
<dbReference type="SUPFAM" id="SSF57829">
    <property type="entry name" value="Zn-binding ribosomal proteins"/>
    <property type="match status" value="1"/>
</dbReference>
<keyword id="KW-1185">Reference proteome</keyword>
<keyword id="KW-0687">Ribonucleoprotein</keyword>
<keyword id="KW-0689">Ribosomal protein</keyword>
<organism>
    <name type="scientific">Amoebophilus asiaticus (strain 5a2)</name>
    <dbReference type="NCBI Taxonomy" id="452471"/>
    <lineage>
        <taxon>Bacteria</taxon>
        <taxon>Pseudomonadati</taxon>
        <taxon>Bacteroidota</taxon>
        <taxon>Cytophagia</taxon>
        <taxon>Cytophagales</taxon>
        <taxon>Amoebophilaceae</taxon>
        <taxon>Candidatus Amoebophilus</taxon>
    </lineage>
</organism>
<name>RL33_AMOA5</name>